<geneLocation type="chloroplast"/>
<keyword id="KW-0150">Chloroplast</keyword>
<keyword id="KW-0472">Membrane</keyword>
<keyword id="KW-0602">Photosynthesis</keyword>
<keyword id="KW-0604">Photosystem II</keyword>
<keyword id="KW-0934">Plastid</keyword>
<keyword id="KW-0793">Thylakoid</keyword>
<keyword id="KW-0812">Transmembrane</keyword>
<keyword id="KW-1133">Transmembrane helix</keyword>
<proteinExistence type="inferred from homology"/>
<organism>
    <name type="scientific">Porphyra purpurea</name>
    <name type="common">Red seaweed</name>
    <name type="synonym">Ulva purpurea</name>
    <dbReference type="NCBI Taxonomy" id="2787"/>
    <lineage>
        <taxon>Eukaryota</taxon>
        <taxon>Rhodophyta</taxon>
        <taxon>Bangiophyceae</taxon>
        <taxon>Bangiales</taxon>
        <taxon>Bangiaceae</taxon>
        <taxon>Porphyra</taxon>
    </lineage>
</organism>
<feature type="chain" id="PRO_0000217290" description="Photosystem II reaction center protein X">
    <location>
        <begin position="1"/>
        <end position="39"/>
    </location>
</feature>
<feature type="transmembrane region" description="Helical" evidence="1">
    <location>
        <begin position="11"/>
        <end position="31"/>
    </location>
</feature>
<reference key="1">
    <citation type="journal article" date="1995" name="Plant Mol. Biol. Rep.">
        <title>Complete nucleotide sequence of the Porphyra purpurea chloroplast genome.</title>
        <authorList>
            <person name="Reith M.E."/>
            <person name="Munholland J."/>
        </authorList>
    </citation>
    <scope>NUCLEOTIDE SEQUENCE [LARGE SCALE GENOMIC DNA]</scope>
    <source>
        <strain>Avonport</strain>
    </source>
</reference>
<comment type="function">
    <text evidence="1">Involved in the binding and/or turnover of quinones at the Q(B) site of photosystem II (PSII). PSII is a light-driven water plastoquinone oxidoreductase, using light energy to abstract electrons from H(2)O, generating a proton gradient subsequently used for ATP formation.</text>
</comment>
<comment type="subunit">
    <text evidence="1">PSII is composed of 1 copy each of membrane proteins PsbA, PsbB, PsbC, PsbD, PsbE, PsbF, PsbH, PsbI, PsbJ, PsbK, PsbL, PsbM, PsbT, PsbX, PsbY, PsbZ, Psb30/Ycf12, at least 3 peripheral proteins of the oxygen-evolving complex and a large number of cofactors. It forms dimeric complexes.</text>
</comment>
<comment type="subcellular location">
    <subcellularLocation>
        <location evidence="1">Plastid</location>
        <location evidence="1">Chloroplast thylakoid membrane</location>
        <topology evidence="1">Single-pass membrane protein</topology>
    </subcellularLocation>
</comment>
<comment type="similarity">
    <text evidence="1">Belongs to the PsbX family. Type 1 subfamily.</text>
</comment>
<accession>P51197</accession>
<name>PSBX_PORPU</name>
<gene>
    <name evidence="1" type="primary">psbX</name>
</gene>
<dbReference type="EMBL" id="U38804">
    <property type="protein sequence ID" value="AAC08083.1"/>
    <property type="molecule type" value="Genomic_DNA"/>
</dbReference>
<dbReference type="PIR" id="S73118">
    <property type="entry name" value="S73118"/>
</dbReference>
<dbReference type="RefSeq" id="NP_053807.1">
    <property type="nucleotide sequence ID" value="NC_000925.1"/>
</dbReference>
<dbReference type="SMR" id="P51197"/>
<dbReference type="GeneID" id="809821"/>
<dbReference type="GO" id="GO:0009535">
    <property type="term" value="C:chloroplast thylakoid membrane"/>
    <property type="evidence" value="ECO:0007669"/>
    <property type="project" value="UniProtKB-SubCell"/>
</dbReference>
<dbReference type="GO" id="GO:0009523">
    <property type="term" value="C:photosystem II"/>
    <property type="evidence" value="ECO:0007669"/>
    <property type="project" value="UniProtKB-KW"/>
</dbReference>
<dbReference type="GO" id="GO:0015979">
    <property type="term" value="P:photosynthesis"/>
    <property type="evidence" value="ECO:0007669"/>
    <property type="project" value="UniProtKB-UniRule"/>
</dbReference>
<dbReference type="Gene3D" id="1.20.5.510">
    <property type="entry name" value="Single helix bin"/>
    <property type="match status" value="1"/>
</dbReference>
<dbReference type="HAMAP" id="MF_01386">
    <property type="entry name" value="PSII_PsbX_1"/>
    <property type="match status" value="1"/>
</dbReference>
<dbReference type="InterPro" id="IPR009518">
    <property type="entry name" value="PSII_PsbX"/>
</dbReference>
<dbReference type="InterPro" id="IPR023431">
    <property type="entry name" value="PSII_PsbX_type_1_subfam"/>
</dbReference>
<dbReference type="Pfam" id="PF06596">
    <property type="entry name" value="PsbX"/>
    <property type="match status" value="1"/>
</dbReference>
<evidence type="ECO:0000255" key="1">
    <source>
        <dbReference type="HAMAP-Rule" id="MF_01386"/>
    </source>
</evidence>
<sequence>MTPSLSSFLNSLILGAVIVVVPITLALLFVSQKDRTIRS</sequence>
<protein>
    <recommendedName>
        <fullName evidence="1">Photosystem II reaction center protein X</fullName>
    </recommendedName>
</protein>